<organism>
    <name type="scientific">Prochlorococcus marinus (strain MIT 9215)</name>
    <dbReference type="NCBI Taxonomy" id="93060"/>
    <lineage>
        <taxon>Bacteria</taxon>
        <taxon>Bacillati</taxon>
        <taxon>Cyanobacteriota</taxon>
        <taxon>Cyanophyceae</taxon>
        <taxon>Synechococcales</taxon>
        <taxon>Prochlorococcaceae</taxon>
        <taxon>Prochlorococcus</taxon>
    </lineage>
</organism>
<proteinExistence type="inferred from homology"/>
<gene>
    <name evidence="1" type="primary">purL</name>
    <name type="ordered locus">P9215_00021</name>
</gene>
<evidence type="ECO:0000255" key="1">
    <source>
        <dbReference type="HAMAP-Rule" id="MF_00420"/>
    </source>
</evidence>
<protein>
    <recommendedName>
        <fullName evidence="1">Phosphoribosylformylglycinamidine synthase subunit PurL</fullName>
        <shortName evidence="1">FGAM synthase</shortName>
        <ecNumber evidence="1">6.3.5.3</ecNumber>
    </recommendedName>
    <alternativeName>
        <fullName evidence="1">Formylglycinamide ribonucleotide amidotransferase subunit II</fullName>
        <shortName evidence="1">FGAR amidotransferase II</shortName>
        <shortName evidence="1">FGAR-AT II</shortName>
    </alternativeName>
    <alternativeName>
        <fullName evidence="1">Glutamine amidotransferase PurL</fullName>
    </alternativeName>
    <alternativeName>
        <fullName evidence="1">Phosphoribosylformylglycinamidine synthase subunit II</fullName>
    </alternativeName>
</protein>
<reference key="1">
    <citation type="journal article" date="2007" name="PLoS Genet.">
        <title>Patterns and implications of gene gain and loss in the evolution of Prochlorococcus.</title>
        <authorList>
            <person name="Kettler G.C."/>
            <person name="Martiny A.C."/>
            <person name="Huang K."/>
            <person name="Zucker J."/>
            <person name="Coleman M.L."/>
            <person name="Rodrigue S."/>
            <person name="Chen F."/>
            <person name="Lapidus A."/>
            <person name="Ferriera S."/>
            <person name="Johnson J."/>
            <person name="Steglich C."/>
            <person name="Church G.M."/>
            <person name="Richardson P."/>
            <person name="Chisholm S.W."/>
        </authorList>
    </citation>
    <scope>NUCLEOTIDE SEQUENCE [LARGE SCALE GENOMIC DNA]</scope>
    <source>
        <strain>MIT 9215</strain>
    </source>
</reference>
<name>PURL_PROM2</name>
<accession>A8G1Z0</accession>
<dbReference type="EC" id="6.3.5.3" evidence="1"/>
<dbReference type="EMBL" id="CP000825">
    <property type="protein sequence ID" value="ABV49621.1"/>
    <property type="molecule type" value="Genomic_DNA"/>
</dbReference>
<dbReference type="RefSeq" id="WP_012006807.1">
    <property type="nucleotide sequence ID" value="NC_009840.1"/>
</dbReference>
<dbReference type="SMR" id="A8G1Z0"/>
<dbReference type="STRING" id="93060.P9215_00021"/>
<dbReference type="KEGG" id="pmh:P9215_00021"/>
<dbReference type="eggNOG" id="COG0046">
    <property type="taxonomic scope" value="Bacteria"/>
</dbReference>
<dbReference type="HOGENOM" id="CLU_003100_0_1_3"/>
<dbReference type="OrthoDB" id="9804441at2"/>
<dbReference type="UniPathway" id="UPA00074">
    <property type="reaction ID" value="UER00128"/>
</dbReference>
<dbReference type="Proteomes" id="UP000002014">
    <property type="component" value="Chromosome"/>
</dbReference>
<dbReference type="GO" id="GO:0005737">
    <property type="term" value="C:cytoplasm"/>
    <property type="evidence" value="ECO:0007669"/>
    <property type="project" value="UniProtKB-SubCell"/>
</dbReference>
<dbReference type="GO" id="GO:0005524">
    <property type="term" value="F:ATP binding"/>
    <property type="evidence" value="ECO:0007669"/>
    <property type="project" value="UniProtKB-UniRule"/>
</dbReference>
<dbReference type="GO" id="GO:0000287">
    <property type="term" value="F:magnesium ion binding"/>
    <property type="evidence" value="ECO:0007669"/>
    <property type="project" value="UniProtKB-UniRule"/>
</dbReference>
<dbReference type="GO" id="GO:0004642">
    <property type="term" value="F:phosphoribosylformylglycinamidine synthase activity"/>
    <property type="evidence" value="ECO:0007669"/>
    <property type="project" value="UniProtKB-UniRule"/>
</dbReference>
<dbReference type="GO" id="GO:0006189">
    <property type="term" value="P:'de novo' IMP biosynthetic process"/>
    <property type="evidence" value="ECO:0007669"/>
    <property type="project" value="UniProtKB-UniRule"/>
</dbReference>
<dbReference type="CDD" id="cd02203">
    <property type="entry name" value="PurL_repeat1"/>
    <property type="match status" value="1"/>
</dbReference>
<dbReference type="CDD" id="cd02204">
    <property type="entry name" value="PurL_repeat2"/>
    <property type="match status" value="1"/>
</dbReference>
<dbReference type="FunFam" id="3.30.1330.10:FF:000004">
    <property type="entry name" value="Phosphoribosylformylglycinamidine synthase subunit PurL"/>
    <property type="match status" value="1"/>
</dbReference>
<dbReference type="Gene3D" id="3.90.650.10">
    <property type="entry name" value="PurM-like C-terminal domain"/>
    <property type="match status" value="2"/>
</dbReference>
<dbReference type="Gene3D" id="3.30.1330.10">
    <property type="entry name" value="PurM-like, N-terminal domain"/>
    <property type="match status" value="2"/>
</dbReference>
<dbReference type="HAMAP" id="MF_00420">
    <property type="entry name" value="PurL_2"/>
    <property type="match status" value="1"/>
</dbReference>
<dbReference type="InterPro" id="IPR010074">
    <property type="entry name" value="PRibForGlyAmidine_synth_PurL"/>
</dbReference>
<dbReference type="InterPro" id="IPR041609">
    <property type="entry name" value="PurL_linker"/>
</dbReference>
<dbReference type="InterPro" id="IPR010918">
    <property type="entry name" value="PurM-like_C_dom"/>
</dbReference>
<dbReference type="InterPro" id="IPR036676">
    <property type="entry name" value="PurM-like_C_sf"/>
</dbReference>
<dbReference type="InterPro" id="IPR016188">
    <property type="entry name" value="PurM-like_N"/>
</dbReference>
<dbReference type="InterPro" id="IPR036921">
    <property type="entry name" value="PurM-like_N_sf"/>
</dbReference>
<dbReference type="NCBIfam" id="TIGR01736">
    <property type="entry name" value="FGAM_synth_II"/>
    <property type="match status" value="1"/>
</dbReference>
<dbReference type="NCBIfam" id="NF002290">
    <property type="entry name" value="PRK01213.1"/>
    <property type="match status" value="1"/>
</dbReference>
<dbReference type="PANTHER" id="PTHR43555">
    <property type="entry name" value="PHOSPHORIBOSYLFORMYLGLYCINAMIDINE SYNTHASE SUBUNIT PURL"/>
    <property type="match status" value="1"/>
</dbReference>
<dbReference type="PANTHER" id="PTHR43555:SF1">
    <property type="entry name" value="PHOSPHORIBOSYLFORMYLGLYCINAMIDINE SYNTHASE SUBUNIT PURL"/>
    <property type="match status" value="1"/>
</dbReference>
<dbReference type="Pfam" id="PF00586">
    <property type="entry name" value="AIRS"/>
    <property type="match status" value="2"/>
</dbReference>
<dbReference type="Pfam" id="PF02769">
    <property type="entry name" value="AIRS_C"/>
    <property type="match status" value="2"/>
</dbReference>
<dbReference type="Pfam" id="PF18072">
    <property type="entry name" value="FGAR-AT_linker"/>
    <property type="match status" value="1"/>
</dbReference>
<dbReference type="PIRSF" id="PIRSF001587">
    <property type="entry name" value="FGAM_synthase_II"/>
    <property type="match status" value="1"/>
</dbReference>
<dbReference type="SUPFAM" id="SSF56042">
    <property type="entry name" value="PurM C-terminal domain-like"/>
    <property type="match status" value="2"/>
</dbReference>
<dbReference type="SUPFAM" id="SSF55326">
    <property type="entry name" value="PurM N-terminal domain-like"/>
    <property type="match status" value="2"/>
</dbReference>
<comment type="function">
    <text evidence="1">Part of the phosphoribosylformylglycinamidine synthase complex involved in the purines biosynthetic pathway. Catalyzes the ATP-dependent conversion of formylglycinamide ribonucleotide (FGAR) and glutamine to yield formylglycinamidine ribonucleotide (FGAM) and glutamate. The FGAM synthase complex is composed of three subunits. PurQ produces an ammonia molecule by converting glutamine to glutamate. PurL transfers the ammonia molecule to FGAR to form FGAM in an ATP-dependent manner. PurS interacts with PurQ and PurL and is thought to assist in the transfer of the ammonia molecule from PurQ to PurL.</text>
</comment>
<comment type="catalytic activity">
    <reaction evidence="1">
        <text>N(2)-formyl-N(1)-(5-phospho-beta-D-ribosyl)glycinamide + L-glutamine + ATP + H2O = 2-formamido-N(1)-(5-O-phospho-beta-D-ribosyl)acetamidine + L-glutamate + ADP + phosphate + H(+)</text>
        <dbReference type="Rhea" id="RHEA:17129"/>
        <dbReference type="ChEBI" id="CHEBI:15377"/>
        <dbReference type="ChEBI" id="CHEBI:15378"/>
        <dbReference type="ChEBI" id="CHEBI:29985"/>
        <dbReference type="ChEBI" id="CHEBI:30616"/>
        <dbReference type="ChEBI" id="CHEBI:43474"/>
        <dbReference type="ChEBI" id="CHEBI:58359"/>
        <dbReference type="ChEBI" id="CHEBI:147286"/>
        <dbReference type="ChEBI" id="CHEBI:147287"/>
        <dbReference type="ChEBI" id="CHEBI:456216"/>
        <dbReference type="EC" id="6.3.5.3"/>
    </reaction>
</comment>
<comment type="pathway">
    <text evidence="1">Purine metabolism; IMP biosynthesis via de novo pathway; 5-amino-1-(5-phospho-D-ribosyl)imidazole from N(2)-formyl-N(1)-(5-phospho-D-ribosyl)glycinamide: step 1/2.</text>
</comment>
<comment type="subunit">
    <text evidence="1">Monomer. Part of the FGAM synthase complex composed of 1 PurL, 1 PurQ and 2 PurS subunits.</text>
</comment>
<comment type="subcellular location">
    <subcellularLocation>
        <location evidence="1">Cytoplasm</location>
    </subcellularLocation>
</comment>
<comment type="similarity">
    <text evidence="1">Belongs to the FGAMS family.</text>
</comment>
<keyword id="KW-0067">ATP-binding</keyword>
<keyword id="KW-0963">Cytoplasm</keyword>
<keyword id="KW-0436">Ligase</keyword>
<keyword id="KW-0460">Magnesium</keyword>
<keyword id="KW-0479">Metal-binding</keyword>
<keyword id="KW-0547">Nucleotide-binding</keyword>
<keyword id="KW-0658">Purine biosynthesis</keyword>
<sequence>MINQENNDLYDLNEALKVENLTLNDYEEICKRLKRKPNRTELGMFGVMWSEHCCYRNSKPLLSKFPTEGKHVLVGPGENAGVIDVGNNQKLVFKIESHNHPSAIEPFQGAATGVGGILRDIFTMGARPIAVLNSLRFGNLDKSSNVDLLRGVVSGIAHYGNCVGVPTVGGEIDFDDSYSGNPLVNVMALGLLETEEIVCSGAKNVGSPVLYVGNTTGRDGVGGASFASSELTTTSLDDRPAVQVGDPFIEKSLIEACLDAFKTGDVIAAQDMGAAGLTCSSAEMAANGKLGISIDLDLVPSREDDMSSYQYLLSESQERMLFVVKEEKINDLIEKFSKWGLYASVVGEVIGTNEVIISHKGKIVAKIPTSALSDDTPVNFHNVINNPPDDLLKKWEWKENDLPEIHEKNIFSLKENKNFSFSEIILKLLSNPSIASKRWIYKQYDSQVQSNTVFTPGKSDAAVIRLREQNKKNKSKVFSGVAASVDCNSRWVALDPFRGSIAAVAESARNVSCVGAEPVAITNNLNFSSPENEIGYWQLSSSCNGIAEACKALETPVTGGNVSLYNESKNKDNLITPINPTPVIGMVGKLDNVEKAISSEWKNIEDQIWLIGSHKSETKIAASSYLEYFHGEITGRPPKIDLLDEKFCQSFLRNAILKSLVVSSHDISDGGLAIALAESCILSERGATIELEKDLNRVDNLLFAEGGSRIIFTISKMKQNEWFNYLQLNQIKFPSSVYVKKIGYVSSDTLKIKIDEKNICNIRVEELTEKFNNSISDYF</sequence>
<feature type="chain" id="PRO_1000060093" description="Phosphoribosylformylglycinamidine synthase subunit PurL">
    <location>
        <begin position="1"/>
        <end position="779"/>
    </location>
</feature>
<feature type="active site" evidence="1">
    <location>
        <position position="52"/>
    </location>
</feature>
<feature type="active site" description="Proton acceptor" evidence="1">
    <location>
        <position position="98"/>
    </location>
</feature>
<feature type="binding site" evidence="1">
    <location>
        <position position="55"/>
    </location>
    <ligand>
        <name>ATP</name>
        <dbReference type="ChEBI" id="CHEBI:30616"/>
    </ligand>
</feature>
<feature type="binding site" evidence="1">
    <location>
        <position position="94"/>
    </location>
    <ligand>
        <name>ATP</name>
        <dbReference type="ChEBI" id="CHEBI:30616"/>
    </ligand>
</feature>
<feature type="binding site" evidence="1">
    <location>
        <position position="96"/>
    </location>
    <ligand>
        <name>Mg(2+)</name>
        <dbReference type="ChEBI" id="CHEBI:18420"/>
        <label>1</label>
    </ligand>
</feature>
<feature type="binding site" evidence="1">
    <location>
        <begin position="97"/>
        <end position="100"/>
    </location>
    <ligand>
        <name>substrate</name>
    </ligand>
</feature>
<feature type="binding site" evidence="1">
    <location>
        <position position="119"/>
    </location>
    <ligand>
        <name>substrate</name>
    </ligand>
</feature>
<feature type="binding site" evidence="1">
    <location>
        <position position="120"/>
    </location>
    <ligand>
        <name>Mg(2+)</name>
        <dbReference type="ChEBI" id="CHEBI:18420"/>
        <label>2</label>
    </ligand>
</feature>
<feature type="binding site" evidence="1">
    <location>
        <position position="243"/>
    </location>
    <ligand>
        <name>substrate</name>
    </ligand>
</feature>
<feature type="binding site" evidence="1">
    <location>
        <position position="271"/>
    </location>
    <ligand>
        <name>Mg(2+)</name>
        <dbReference type="ChEBI" id="CHEBI:18420"/>
        <label>2</label>
    </ligand>
</feature>
<feature type="binding site" evidence="1">
    <location>
        <begin position="315"/>
        <end position="317"/>
    </location>
    <ligand>
        <name>substrate</name>
    </ligand>
</feature>
<feature type="binding site" evidence="1">
    <location>
        <position position="523"/>
    </location>
    <ligand>
        <name>ATP</name>
        <dbReference type="ChEBI" id="CHEBI:30616"/>
    </ligand>
</feature>
<feature type="binding site" evidence="1">
    <location>
        <position position="560"/>
    </location>
    <ligand>
        <name>ATP</name>
        <dbReference type="ChEBI" id="CHEBI:30616"/>
    </ligand>
</feature>
<feature type="binding site" evidence="1">
    <location>
        <position position="561"/>
    </location>
    <ligand>
        <name>Mg(2+)</name>
        <dbReference type="ChEBI" id="CHEBI:18420"/>
        <label>1</label>
    </ligand>
</feature>
<feature type="binding site" evidence="1">
    <location>
        <position position="563"/>
    </location>
    <ligand>
        <name>substrate</name>
    </ligand>
</feature>